<name>COPB_STAAU</name>
<proteinExistence type="inferred from homology"/>
<evidence type="ECO:0000250" key="1"/>
<evidence type="ECO:0000255" key="2"/>
<evidence type="ECO:0000256" key="3">
    <source>
        <dbReference type="SAM" id="MobiDB-lite"/>
    </source>
</evidence>
<evidence type="ECO:0000305" key="4"/>
<protein>
    <recommendedName>
        <fullName>Probable copper-transporting P-type ATPase B</fullName>
        <ecNumber>7.2.2.8</ecNumber>
    </recommendedName>
</protein>
<organism>
    <name type="scientific">Staphylococcus aureus</name>
    <dbReference type="NCBI Taxonomy" id="1280"/>
    <lineage>
        <taxon>Bacteria</taxon>
        <taxon>Bacillati</taxon>
        <taxon>Bacillota</taxon>
        <taxon>Bacilli</taxon>
        <taxon>Bacillales</taxon>
        <taxon>Staphylococcaceae</taxon>
        <taxon>Staphylococcus</taxon>
    </lineage>
</organism>
<feature type="chain" id="PRO_0000350602" description="Probable copper-transporting P-type ATPase B">
    <location>
        <begin position="1"/>
        <end position="672"/>
    </location>
</feature>
<feature type="transmembrane region" description="Helical" evidence="2">
    <location>
        <begin position="30"/>
        <end position="50"/>
    </location>
</feature>
<feature type="transmembrane region" description="Helical" evidence="2">
    <location>
        <begin position="55"/>
        <end position="75"/>
    </location>
</feature>
<feature type="transmembrane region" description="Helical" evidence="2">
    <location>
        <begin position="93"/>
        <end position="113"/>
    </location>
</feature>
<feature type="transmembrane region" description="Helical" evidence="2">
    <location>
        <begin position="125"/>
        <end position="145"/>
    </location>
</feature>
<feature type="transmembrane region" description="Helical" evidence="2">
    <location>
        <begin position="282"/>
        <end position="302"/>
    </location>
</feature>
<feature type="transmembrane region" description="Helical" evidence="2">
    <location>
        <begin position="313"/>
        <end position="333"/>
    </location>
</feature>
<feature type="transmembrane region" description="Helical" evidence="2">
    <location>
        <begin position="621"/>
        <end position="643"/>
    </location>
</feature>
<feature type="transmembrane region" description="Helical" evidence="2">
    <location>
        <begin position="647"/>
        <end position="669"/>
    </location>
</feature>
<feature type="region of interest" description="Disordered" evidence="3">
    <location>
        <begin position="1"/>
        <end position="22"/>
    </location>
</feature>
<feature type="compositionally biased region" description="Basic and acidic residues" evidence="3">
    <location>
        <begin position="1"/>
        <end position="17"/>
    </location>
</feature>
<feature type="active site" description="4-aspartylphosphate intermediate" evidence="1">
    <location>
        <position position="365"/>
    </location>
</feature>
<feature type="binding site" evidence="1">
    <location>
        <position position="563"/>
    </location>
    <ligand>
        <name>Mg(2+)</name>
        <dbReference type="ChEBI" id="CHEBI:18420"/>
    </ligand>
</feature>
<feature type="binding site" evidence="1">
    <location>
        <position position="567"/>
    </location>
    <ligand>
        <name>Mg(2+)</name>
        <dbReference type="ChEBI" id="CHEBI:18420"/>
    </ligand>
</feature>
<keyword id="KW-0067">ATP-binding</keyword>
<keyword id="KW-1003">Cell membrane</keyword>
<keyword id="KW-0186">Copper</keyword>
<keyword id="KW-0187">Copper transport</keyword>
<keyword id="KW-0406">Ion transport</keyword>
<keyword id="KW-0460">Magnesium</keyword>
<keyword id="KW-0472">Membrane</keyword>
<keyword id="KW-0479">Metal-binding</keyword>
<keyword id="KW-0547">Nucleotide-binding</keyword>
<keyword id="KW-0597">Phosphoprotein</keyword>
<keyword id="KW-1278">Translocase</keyword>
<keyword id="KW-0812">Transmembrane</keyword>
<keyword id="KW-1133">Transmembrane helix</keyword>
<keyword id="KW-0813">Transport</keyword>
<sequence length="672" mass="73184">MEHHSHQEHENHTSHGNHEHHHHGNFKSKFFISLIFAIPIIILSPMMGVKLPFQISFTGSDWIVLILATILFFYGGKPFLSGAKDEISTKKPGMMTLVALGISVAYIYSLYAFYMNNFSGSSTHTMDFFWELATLILIMLLGHWIEMNAVGNAGNALKKMAELLPNTAVKLIDNNQREEVKISDIHIDDIVEVRAGESIPTDGIIVRGETSIDESLVTGESKKVHKTHNDDVIGGSINGSGTVQVKVTATGENGYLSQVMGLVNQAQNDKSKAELLSDKVAGYLFYFAVSIGLISFIVWMLIQNNVDFALERLVTVLVIACPHALGLAIPLVTARSTSIGAHNGLIIKNRESVEIAQHIDYIMMDKTGTLTEGNFSVNHYESFTDELNNEEILSLFASLESNSNHPLATGIVDFAKGKNISYATPQEVNNIPGVGLEGTVDNKKLKIVNVSYLDKSNFDYNKEQFTNLAQQGNSISYLIHDRQVIGIIAQGDKIKESSKQMVSDLLSRNITPVMLTGDNKEVAQTVAEELGISDVHAQLMPEDKESIIQDYQSNGSKIMMVGDGINDAPSLIRADIGMAIGAGTDVAIESGDVILVKSNPSDIINFLSLSKNTMKKMVQNLWWGAGYNVIAVPLAAGILASIGLILSPAVGAILMSLSTIIVAINAFTLKLK</sequence>
<comment type="function">
    <text evidence="1">Involved in copper transport.</text>
</comment>
<comment type="catalytic activity">
    <reaction>
        <text>Cu(+)(in) + ATP + H2O = Cu(+)(out) + ADP + phosphate + H(+)</text>
        <dbReference type="Rhea" id="RHEA:25792"/>
        <dbReference type="ChEBI" id="CHEBI:15377"/>
        <dbReference type="ChEBI" id="CHEBI:15378"/>
        <dbReference type="ChEBI" id="CHEBI:30616"/>
        <dbReference type="ChEBI" id="CHEBI:43474"/>
        <dbReference type="ChEBI" id="CHEBI:49552"/>
        <dbReference type="ChEBI" id="CHEBI:456216"/>
        <dbReference type="EC" id="7.2.2.8"/>
    </reaction>
</comment>
<comment type="subcellular location">
    <subcellularLocation>
        <location evidence="1">Cell membrane</location>
        <topology evidence="1">Multi-pass membrane protein</topology>
    </subcellularLocation>
</comment>
<comment type="similarity">
    <text evidence="4">Belongs to the cation transport ATPase (P-type) (TC 3.A.3) family. Type IB subfamily.</text>
</comment>
<reference key="1">
    <citation type="journal article" date="2005" name="Appl. Environ. Microbiol.">
        <title>Characterization of a multicopper oxidase gene from Staphylococcus aureus.</title>
        <authorList>
            <person name="Sitthisak S."/>
            <person name="Howieson K."/>
            <person name="Amezola C."/>
            <person name="Jayaswal R.K."/>
        </authorList>
    </citation>
    <scope>NUCLEOTIDE SEQUENCE [GENOMIC DNA]</scope>
    <source>
        <strain>ATCC 12600 / DSM 20231 / IAM 12544 / NCDO 949 / NCTC 8532</strain>
    </source>
</reference>
<accession>Q69HU0</accession>
<gene>
    <name type="primary">copB</name>
</gene>
<dbReference type="EC" id="7.2.2.8"/>
<dbReference type="EMBL" id="AY259130">
    <property type="protein sequence ID" value="AAQ17237.1"/>
    <property type="molecule type" value="Genomic_DNA"/>
</dbReference>
<dbReference type="SMR" id="Q69HU0"/>
<dbReference type="GO" id="GO:0005886">
    <property type="term" value="C:plasma membrane"/>
    <property type="evidence" value="ECO:0007669"/>
    <property type="project" value="UniProtKB-SubCell"/>
</dbReference>
<dbReference type="GO" id="GO:0005524">
    <property type="term" value="F:ATP binding"/>
    <property type="evidence" value="ECO:0007669"/>
    <property type="project" value="UniProtKB-KW"/>
</dbReference>
<dbReference type="GO" id="GO:0016887">
    <property type="term" value="F:ATP hydrolysis activity"/>
    <property type="evidence" value="ECO:0007669"/>
    <property type="project" value="InterPro"/>
</dbReference>
<dbReference type="GO" id="GO:0005507">
    <property type="term" value="F:copper ion binding"/>
    <property type="evidence" value="ECO:0007669"/>
    <property type="project" value="TreeGrafter"/>
</dbReference>
<dbReference type="GO" id="GO:0043682">
    <property type="term" value="F:P-type divalent copper transporter activity"/>
    <property type="evidence" value="ECO:0007669"/>
    <property type="project" value="TreeGrafter"/>
</dbReference>
<dbReference type="GO" id="GO:0140581">
    <property type="term" value="F:P-type monovalent copper transporter activity"/>
    <property type="evidence" value="ECO:0007669"/>
    <property type="project" value="UniProtKB-EC"/>
</dbReference>
<dbReference type="GO" id="GO:0055070">
    <property type="term" value="P:copper ion homeostasis"/>
    <property type="evidence" value="ECO:0007669"/>
    <property type="project" value="TreeGrafter"/>
</dbReference>
<dbReference type="CDD" id="cd07552">
    <property type="entry name" value="P-type_ATPase_Cu-like"/>
    <property type="match status" value="1"/>
</dbReference>
<dbReference type="FunFam" id="2.70.150.10:FF:000002">
    <property type="entry name" value="Copper-transporting ATPase 1, putative"/>
    <property type="match status" value="1"/>
</dbReference>
<dbReference type="Gene3D" id="3.40.1110.10">
    <property type="entry name" value="Calcium-transporting ATPase, cytoplasmic domain N"/>
    <property type="match status" value="1"/>
</dbReference>
<dbReference type="Gene3D" id="2.70.150.10">
    <property type="entry name" value="Calcium-transporting ATPase, cytoplasmic transduction domain A"/>
    <property type="match status" value="1"/>
</dbReference>
<dbReference type="Gene3D" id="3.40.50.1000">
    <property type="entry name" value="HAD superfamily/HAD-like"/>
    <property type="match status" value="1"/>
</dbReference>
<dbReference type="InterPro" id="IPR023299">
    <property type="entry name" value="ATPase_P-typ_cyto_dom_N"/>
</dbReference>
<dbReference type="InterPro" id="IPR018303">
    <property type="entry name" value="ATPase_P-typ_P_site"/>
</dbReference>
<dbReference type="InterPro" id="IPR023298">
    <property type="entry name" value="ATPase_P-typ_TM_dom_sf"/>
</dbReference>
<dbReference type="InterPro" id="IPR008250">
    <property type="entry name" value="ATPase_P-typ_transduc_dom_A_sf"/>
</dbReference>
<dbReference type="InterPro" id="IPR036412">
    <property type="entry name" value="HAD-like_sf"/>
</dbReference>
<dbReference type="InterPro" id="IPR023214">
    <property type="entry name" value="HAD_sf"/>
</dbReference>
<dbReference type="InterPro" id="IPR027256">
    <property type="entry name" value="P-typ_ATPase_IB"/>
</dbReference>
<dbReference type="InterPro" id="IPR001757">
    <property type="entry name" value="P_typ_ATPase"/>
</dbReference>
<dbReference type="InterPro" id="IPR044492">
    <property type="entry name" value="P_typ_ATPase_HD_dom"/>
</dbReference>
<dbReference type="NCBIfam" id="TIGR01511">
    <property type="entry name" value="ATPase-IB1_Cu"/>
    <property type="match status" value="1"/>
</dbReference>
<dbReference type="NCBIfam" id="TIGR01525">
    <property type="entry name" value="ATPase-IB_hvy"/>
    <property type="match status" value="1"/>
</dbReference>
<dbReference type="NCBIfam" id="TIGR01494">
    <property type="entry name" value="ATPase_P-type"/>
    <property type="match status" value="1"/>
</dbReference>
<dbReference type="PANTHER" id="PTHR43520">
    <property type="entry name" value="ATP7, ISOFORM B"/>
    <property type="match status" value="1"/>
</dbReference>
<dbReference type="PANTHER" id="PTHR43520:SF8">
    <property type="entry name" value="P-TYPE CU(+) TRANSPORTER"/>
    <property type="match status" value="1"/>
</dbReference>
<dbReference type="Pfam" id="PF00122">
    <property type="entry name" value="E1-E2_ATPase"/>
    <property type="match status" value="1"/>
</dbReference>
<dbReference type="Pfam" id="PF00702">
    <property type="entry name" value="Hydrolase"/>
    <property type="match status" value="1"/>
</dbReference>
<dbReference type="PRINTS" id="PR00119">
    <property type="entry name" value="CATATPASE"/>
</dbReference>
<dbReference type="PRINTS" id="PR00120">
    <property type="entry name" value="HATPASE"/>
</dbReference>
<dbReference type="SFLD" id="SFLDG00002">
    <property type="entry name" value="C1.7:_P-type_atpase_like"/>
    <property type="match status" value="1"/>
</dbReference>
<dbReference type="SFLD" id="SFLDF00027">
    <property type="entry name" value="p-type_atpase"/>
    <property type="match status" value="1"/>
</dbReference>
<dbReference type="SUPFAM" id="SSF81653">
    <property type="entry name" value="Calcium ATPase, transduction domain A"/>
    <property type="match status" value="1"/>
</dbReference>
<dbReference type="SUPFAM" id="SSF81665">
    <property type="entry name" value="Calcium ATPase, transmembrane domain M"/>
    <property type="match status" value="1"/>
</dbReference>
<dbReference type="SUPFAM" id="SSF56784">
    <property type="entry name" value="HAD-like"/>
    <property type="match status" value="1"/>
</dbReference>
<dbReference type="PROSITE" id="PS00154">
    <property type="entry name" value="ATPASE_E1_E2"/>
    <property type="match status" value="1"/>
</dbReference>